<name>KCY_ANOFW</name>
<keyword id="KW-0067">ATP-binding</keyword>
<keyword id="KW-0963">Cytoplasm</keyword>
<keyword id="KW-0418">Kinase</keyword>
<keyword id="KW-0547">Nucleotide-binding</keyword>
<keyword id="KW-0808">Transferase</keyword>
<accession>B7GHN1</accession>
<feature type="chain" id="PRO_1000119006" description="Cytidylate kinase">
    <location>
        <begin position="1"/>
        <end position="225"/>
    </location>
</feature>
<feature type="binding site" evidence="1">
    <location>
        <begin position="11"/>
        <end position="19"/>
    </location>
    <ligand>
        <name>ATP</name>
        <dbReference type="ChEBI" id="CHEBI:30616"/>
    </ligand>
</feature>
<evidence type="ECO:0000255" key="1">
    <source>
        <dbReference type="HAMAP-Rule" id="MF_00238"/>
    </source>
</evidence>
<comment type="catalytic activity">
    <reaction evidence="1">
        <text>CMP + ATP = CDP + ADP</text>
        <dbReference type="Rhea" id="RHEA:11600"/>
        <dbReference type="ChEBI" id="CHEBI:30616"/>
        <dbReference type="ChEBI" id="CHEBI:58069"/>
        <dbReference type="ChEBI" id="CHEBI:60377"/>
        <dbReference type="ChEBI" id="CHEBI:456216"/>
        <dbReference type="EC" id="2.7.4.25"/>
    </reaction>
</comment>
<comment type="catalytic activity">
    <reaction evidence="1">
        <text>dCMP + ATP = dCDP + ADP</text>
        <dbReference type="Rhea" id="RHEA:25094"/>
        <dbReference type="ChEBI" id="CHEBI:30616"/>
        <dbReference type="ChEBI" id="CHEBI:57566"/>
        <dbReference type="ChEBI" id="CHEBI:58593"/>
        <dbReference type="ChEBI" id="CHEBI:456216"/>
        <dbReference type="EC" id="2.7.4.25"/>
    </reaction>
</comment>
<comment type="subcellular location">
    <subcellularLocation>
        <location evidence="1">Cytoplasm</location>
    </subcellularLocation>
</comment>
<comment type="similarity">
    <text evidence="1">Belongs to the cytidylate kinase family. Type 1 subfamily.</text>
</comment>
<gene>
    <name evidence="1" type="primary">cmk</name>
    <name type="ordered locus">Aflv_1077</name>
</gene>
<protein>
    <recommendedName>
        <fullName evidence="1">Cytidylate kinase</fullName>
        <shortName evidence="1">CK</shortName>
        <ecNumber evidence="1">2.7.4.25</ecNumber>
    </recommendedName>
    <alternativeName>
        <fullName evidence="1">Cytidine monophosphate kinase</fullName>
        <shortName evidence="1">CMP kinase</shortName>
    </alternativeName>
</protein>
<reference key="1">
    <citation type="journal article" date="2008" name="Genome Biol.">
        <title>Encapsulated in silica: genome, proteome and physiology of the thermophilic bacterium Anoxybacillus flavithermus WK1.</title>
        <authorList>
            <person name="Saw J.H."/>
            <person name="Mountain B.W."/>
            <person name="Feng L."/>
            <person name="Omelchenko M.V."/>
            <person name="Hou S."/>
            <person name="Saito J.A."/>
            <person name="Stott M.B."/>
            <person name="Li D."/>
            <person name="Zhao G."/>
            <person name="Wu J."/>
            <person name="Galperin M.Y."/>
            <person name="Koonin E.V."/>
            <person name="Makarova K.S."/>
            <person name="Wolf Y.I."/>
            <person name="Rigden D.J."/>
            <person name="Dunfield P.F."/>
            <person name="Wang L."/>
            <person name="Alam M."/>
        </authorList>
    </citation>
    <scope>NUCLEOTIDE SEQUENCE [LARGE SCALE GENOMIC DNA]</scope>
    <source>
        <strain>DSM 21510 / WK1</strain>
    </source>
</reference>
<organism>
    <name type="scientific">Anoxybacillus flavithermus (strain DSM 21510 / WK1)</name>
    <dbReference type="NCBI Taxonomy" id="491915"/>
    <lineage>
        <taxon>Bacteria</taxon>
        <taxon>Bacillati</taxon>
        <taxon>Bacillota</taxon>
        <taxon>Bacilli</taxon>
        <taxon>Bacillales</taxon>
        <taxon>Anoxybacillaceae</taxon>
        <taxon>Anoxybacillus</taxon>
    </lineage>
</organism>
<sequence length="225" mass="25088">MEKKISIAIDGPAAAGKSTVAKRLAEALSYVYIDTGAMYRALTYCALQRGVDVHNEKQLMNVLHDTYIELKPSPSGQLVFANGENVTEAIRTNDVTNNVSYVAKHPAVREEMVKRQRELGQHGGVVMDGRDIGTHVLPHAEVKIFLLASVEERAKRRHEENVLRGIPSDFEQLKEEIARRDQIDSERAVAPLKKAEDAIEIDTTSLSIDEVVDRIMCIVQERVEG</sequence>
<proteinExistence type="inferred from homology"/>
<dbReference type="EC" id="2.7.4.25" evidence="1"/>
<dbReference type="EMBL" id="CP000922">
    <property type="protein sequence ID" value="ACJ33453.1"/>
    <property type="molecule type" value="Genomic_DNA"/>
</dbReference>
<dbReference type="RefSeq" id="WP_004889811.1">
    <property type="nucleotide sequence ID" value="NC_011567.1"/>
</dbReference>
<dbReference type="SMR" id="B7GHN1"/>
<dbReference type="STRING" id="491915.Aflv_1077"/>
<dbReference type="GeneID" id="7037334"/>
<dbReference type="KEGG" id="afl:Aflv_1077"/>
<dbReference type="eggNOG" id="COG0283">
    <property type="taxonomic scope" value="Bacteria"/>
</dbReference>
<dbReference type="HOGENOM" id="CLU_079959_0_2_9"/>
<dbReference type="Proteomes" id="UP000000742">
    <property type="component" value="Chromosome"/>
</dbReference>
<dbReference type="GO" id="GO:0005829">
    <property type="term" value="C:cytosol"/>
    <property type="evidence" value="ECO:0007669"/>
    <property type="project" value="TreeGrafter"/>
</dbReference>
<dbReference type="GO" id="GO:0005524">
    <property type="term" value="F:ATP binding"/>
    <property type="evidence" value="ECO:0007669"/>
    <property type="project" value="UniProtKB-UniRule"/>
</dbReference>
<dbReference type="GO" id="GO:0036430">
    <property type="term" value="F:CMP kinase activity"/>
    <property type="evidence" value="ECO:0007669"/>
    <property type="project" value="RHEA"/>
</dbReference>
<dbReference type="GO" id="GO:0036431">
    <property type="term" value="F:dCMP kinase activity"/>
    <property type="evidence" value="ECO:0007669"/>
    <property type="project" value="RHEA"/>
</dbReference>
<dbReference type="GO" id="GO:0015949">
    <property type="term" value="P:nucleobase-containing small molecule interconversion"/>
    <property type="evidence" value="ECO:0007669"/>
    <property type="project" value="TreeGrafter"/>
</dbReference>
<dbReference type="GO" id="GO:0006220">
    <property type="term" value="P:pyrimidine nucleotide metabolic process"/>
    <property type="evidence" value="ECO:0007669"/>
    <property type="project" value="UniProtKB-UniRule"/>
</dbReference>
<dbReference type="CDD" id="cd02020">
    <property type="entry name" value="CMPK"/>
    <property type="match status" value="1"/>
</dbReference>
<dbReference type="FunFam" id="3.40.50.300:FF:000484">
    <property type="entry name" value="Cytidylate kinase"/>
    <property type="match status" value="1"/>
</dbReference>
<dbReference type="Gene3D" id="3.40.50.300">
    <property type="entry name" value="P-loop containing nucleotide triphosphate hydrolases"/>
    <property type="match status" value="1"/>
</dbReference>
<dbReference type="HAMAP" id="MF_00238">
    <property type="entry name" value="Cytidyl_kinase_type1"/>
    <property type="match status" value="1"/>
</dbReference>
<dbReference type="InterPro" id="IPR003136">
    <property type="entry name" value="Cytidylate_kin"/>
</dbReference>
<dbReference type="InterPro" id="IPR011994">
    <property type="entry name" value="Cytidylate_kinase_dom"/>
</dbReference>
<dbReference type="InterPro" id="IPR027417">
    <property type="entry name" value="P-loop_NTPase"/>
</dbReference>
<dbReference type="NCBIfam" id="TIGR00017">
    <property type="entry name" value="cmk"/>
    <property type="match status" value="1"/>
</dbReference>
<dbReference type="PANTHER" id="PTHR21299:SF2">
    <property type="entry name" value="CYTIDYLATE KINASE"/>
    <property type="match status" value="1"/>
</dbReference>
<dbReference type="PANTHER" id="PTHR21299">
    <property type="entry name" value="CYTIDYLATE KINASE/PANTOATE-BETA-ALANINE LIGASE"/>
    <property type="match status" value="1"/>
</dbReference>
<dbReference type="Pfam" id="PF02224">
    <property type="entry name" value="Cytidylate_kin"/>
    <property type="match status" value="1"/>
</dbReference>
<dbReference type="SUPFAM" id="SSF52540">
    <property type="entry name" value="P-loop containing nucleoside triphosphate hydrolases"/>
    <property type="match status" value="1"/>
</dbReference>